<organism>
    <name type="scientific">Caulobacter vibrioides (strain NA1000 / CB15N)</name>
    <name type="common">Caulobacter crescentus</name>
    <dbReference type="NCBI Taxonomy" id="565050"/>
    <lineage>
        <taxon>Bacteria</taxon>
        <taxon>Pseudomonadati</taxon>
        <taxon>Pseudomonadota</taxon>
        <taxon>Alphaproteobacteria</taxon>
        <taxon>Caulobacterales</taxon>
        <taxon>Caulobacteraceae</taxon>
        <taxon>Caulobacter</taxon>
    </lineage>
</organism>
<gene>
    <name evidence="2" type="primary">trmB</name>
    <name type="ordered locus">CCNA_00047</name>
</gene>
<dbReference type="EC" id="2.1.1.33" evidence="2"/>
<dbReference type="EMBL" id="CP001340">
    <property type="protein sequence ID" value="ACL93514.1"/>
    <property type="molecule type" value="Genomic_DNA"/>
</dbReference>
<dbReference type="RefSeq" id="WP_012639863.1">
    <property type="nucleotide sequence ID" value="NC_011916.1"/>
</dbReference>
<dbReference type="RefSeq" id="YP_002515422.1">
    <property type="nucleotide sequence ID" value="NC_011916.1"/>
</dbReference>
<dbReference type="SMR" id="B8GX04"/>
<dbReference type="GeneID" id="7332137"/>
<dbReference type="KEGG" id="ccs:CCNA_00047"/>
<dbReference type="PATRIC" id="fig|565050.3.peg.47"/>
<dbReference type="HOGENOM" id="CLU_050910_0_3_5"/>
<dbReference type="OrthoDB" id="9802090at2"/>
<dbReference type="PhylomeDB" id="B8GX04"/>
<dbReference type="UniPathway" id="UPA00989"/>
<dbReference type="Proteomes" id="UP000001364">
    <property type="component" value="Chromosome"/>
</dbReference>
<dbReference type="GO" id="GO:0043527">
    <property type="term" value="C:tRNA methyltransferase complex"/>
    <property type="evidence" value="ECO:0007669"/>
    <property type="project" value="TreeGrafter"/>
</dbReference>
<dbReference type="GO" id="GO:0008176">
    <property type="term" value="F:tRNA (guanine(46)-N7)-methyltransferase activity"/>
    <property type="evidence" value="ECO:0007669"/>
    <property type="project" value="UniProtKB-UniRule"/>
</dbReference>
<dbReference type="CDD" id="cd02440">
    <property type="entry name" value="AdoMet_MTases"/>
    <property type="match status" value="1"/>
</dbReference>
<dbReference type="Gene3D" id="3.40.50.150">
    <property type="entry name" value="Vaccinia Virus protein VP39"/>
    <property type="match status" value="1"/>
</dbReference>
<dbReference type="HAMAP" id="MF_01057">
    <property type="entry name" value="tRNA_methyltr_TrmB"/>
    <property type="match status" value="1"/>
</dbReference>
<dbReference type="InterPro" id="IPR029063">
    <property type="entry name" value="SAM-dependent_MTases_sf"/>
</dbReference>
<dbReference type="InterPro" id="IPR003358">
    <property type="entry name" value="tRNA_(Gua-N-7)_MeTrfase_Trmb"/>
</dbReference>
<dbReference type="InterPro" id="IPR055361">
    <property type="entry name" value="tRNA_methyltr_TrmB_bact"/>
</dbReference>
<dbReference type="NCBIfam" id="TIGR00091">
    <property type="entry name" value="tRNA (guanosine(46)-N7)-methyltransferase TrmB"/>
    <property type="match status" value="1"/>
</dbReference>
<dbReference type="PANTHER" id="PTHR23417">
    <property type="entry name" value="3-DEOXY-D-MANNO-OCTULOSONIC-ACID TRANSFERASE/TRNA GUANINE-N 7 - -METHYLTRANSFERASE"/>
    <property type="match status" value="1"/>
</dbReference>
<dbReference type="PANTHER" id="PTHR23417:SF14">
    <property type="entry name" value="PENTACOTRIPEPTIDE-REPEAT REGION OF PRORP DOMAIN-CONTAINING PROTEIN"/>
    <property type="match status" value="1"/>
</dbReference>
<dbReference type="Pfam" id="PF02390">
    <property type="entry name" value="Methyltransf_4"/>
    <property type="match status" value="1"/>
</dbReference>
<dbReference type="SUPFAM" id="SSF53335">
    <property type="entry name" value="S-adenosyl-L-methionine-dependent methyltransferases"/>
    <property type="match status" value="1"/>
</dbReference>
<dbReference type="PROSITE" id="PS51625">
    <property type="entry name" value="SAM_MT_TRMB"/>
    <property type="match status" value="1"/>
</dbReference>
<reference key="1">
    <citation type="journal article" date="2010" name="J. Bacteriol.">
        <title>The genetic basis of laboratory adaptation in Caulobacter crescentus.</title>
        <authorList>
            <person name="Marks M.E."/>
            <person name="Castro-Rojas C.M."/>
            <person name="Teiling C."/>
            <person name="Du L."/>
            <person name="Kapatral V."/>
            <person name="Walunas T.L."/>
            <person name="Crosson S."/>
        </authorList>
    </citation>
    <scope>NUCLEOTIDE SEQUENCE [LARGE SCALE GENOMIC DNA]</scope>
    <source>
        <strain>NA1000 / CB15N</strain>
    </source>
</reference>
<evidence type="ECO:0000250" key="1"/>
<evidence type="ECO:0000255" key="2">
    <source>
        <dbReference type="HAMAP-Rule" id="MF_01057"/>
    </source>
</evidence>
<evidence type="ECO:0000256" key="3">
    <source>
        <dbReference type="SAM" id="MobiDB-lite"/>
    </source>
</evidence>
<accession>B8GX04</accession>
<comment type="function">
    <text evidence="2">Catalyzes the formation of N(7)-methylguanine at position 46 (m7G46) in tRNA.</text>
</comment>
<comment type="catalytic activity">
    <reaction evidence="2">
        <text>guanosine(46) in tRNA + S-adenosyl-L-methionine = N(7)-methylguanosine(46) in tRNA + S-adenosyl-L-homocysteine</text>
        <dbReference type="Rhea" id="RHEA:42708"/>
        <dbReference type="Rhea" id="RHEA-COMP:10188"/>
        <dbReference type="Rhea" id="RHEA-COMP:10189"/>
        <dbReference type="ChEBI" id="CHEBI:57856"/>
        <dbReference type="ChEBI" id="CHEBI:59789"/>
        <dbReference type="ChEBI" id="CHEBI:74269"/>
        <dbReference type="ChEBI" id="CHEBI:74480"/>
        <dbReference type="EC" id="2.1.1.33"/>
    </reaction>
</comment>
<comment type="pathway">
    <text evidence="2">tRNA modification; N(7)-methylguanine-tRNA biosynthesis.</text>
</comment>
<comment type="similarity">
    <text evidence="2">Belongs to the class I-like SAM-binding methyltransferase superfamily. TrmB family.</text>
</comment>
<protein>
    <recommendedName>
        <fullName evidence="2">tRNA (guanine-N(7)-)-methyltransferase</fullName>
        <ecNumber evidence="2">2.1.1.33</ecNumber>
    </recommendedName>
    <alternativeName>
        <fullName evidence="2">tRNA (guanine(46)-N(7))-methyltransferase</fullName>
    </alternativeName>
    <alternativeName>
        <fullName evidence="2">tRNA(m7G46)-methyltransferase</fullName>
    </alternativeName>
</protein>
<keyword id="KW-0489">Methyltransferase</keyword>
<keyword id="KW-1185">Reference proteome</keyword>
<keyword id="KW-0949">S-adenosyl-L-methionine</keyword>
<keyword id="KW-0808">Transferase</keyword>
<keyword id="KW-0819">tRNA processing</keyword>
<sequence>MTTPQQPHGPLRSFGRLKSRPVKPRQQALLDTLLPEIAVPTGPFQPLDLMPEAKAVWLEIGFGGGEHMASQAGRNPETLVIGAEPFVNGVASAVRHVEEQALKNVRIHEGDARDVVDWLPDACLDRVFIMFPDPWHKARHNKRRLIQPEFVAKLARVMKPGAALRFATDWADYAEWTTERVLADPSFRFADEAADRNAIPADHVTTRYEEKKLGDCAPVFLDFTRG</sequence>
<feature type="chain" id="PRO_1000149650" description="tRNA (guanine-N(7)-)-methyltransferase">
    <location>
        <begin position="1"/>
        <end position="226"/>
    </location>
</feature>
<feature type="region of interest" description="Disordered" evidence="3">
    <location>
        <begin position="1"/>
        <end position="22"/>
    </location>
</feature>
<feature type="region of interest" description="Interaction with RNA" evidence="2">
    <location>
        <begin position="139"/>
        <end position="144"/>
    </location>
</feature>
<feature type="active site" evidence="1">
    <location>
        <position position="133"/>
    </location>
</feature>
<feature type="binding site" evidence="2">
    <location>
        <position position="59"/>
    </location>
    <ligand>
        <name>S-adenosyl-L-methionine</name>
        <dbReference type="ChEBI" id="CHEBI:59789"/>
    </ligand>
</feature>
<feature type="binding site" evidence="2">
    <location>
        <position position="84"/>
    </location>
    <ligand>
        <name>S-adenosyl-L-methionine</name>
        <dbReference type="ChEBI" id="CHEBI:59789"/>
    </ligand>
</feature>
<feature type="binding site" evidence="2">
    <location>
        <position position="111"/>
    </location>
    <ligand>
        <name>S-adenosyl-L-methionine</name>
        <dbReference type="ChEBI" id="CHEBI:59789"/>
    </ligand>
</feature>
<feature type="binding site" evidence="2">
    <location>
        <position position="133"/>
    </location>
    <ligand>
        <name>S-adenosyl-L-methionine</name>
        <dbReference type="ChEBI" id="CHEBI:59789"/>
    </ligand>
</feature>
<feature type="binding site" evidence="2">
    <location>
        <position position="137"/>
    </location>
    <ligand>
        <name>substrate</name>
    </ligand>
</feature>
<feature type="binding site" evidence="2">
    <location>
        <position position="169"/>
    </location>
    <ligand>
        <name>substrate</name>
    </ligand>
</feature>
<feature type="binding site" evidence="2">
    <location>
        <begin position="206"/>
        <end position="209"/>
    </location>
    <ligand>
        <name>substrate</name>
    </ligand>
</feature>
<proteinExistence type="inferred from homology"/>
<name>TRMB_CAUVN</name>